<sequence length="450" mass="48869">MLKYFGTDGVRGEANKVLTPEMAFKLGRMGGYVLTKEKEDGGQARVLVSRDTRISGEMLEHALISGLLSVGIEVLECGVMTTPGLSYLVQAQGADAGVQISASHNPVEDNGIKFFGSNGLKLSDAKEEEIEELIDTKQDMLPRPSAEGLGTVTDFRDGSNKYIQFLENTIPEDLSGIKVVIDGANGAASAFISRLFADLDVDFTTISTHLNGLNINDHCGATHTARLQEEVVKQGAQLGLAFDGDADRCIAVDENGNEVDGDHIMYVIGSYLADHGRLKKDTIVTTVMSNLGFTKALERRGIKNVRTQVGDRYVSEEMRANGYSLGGEQSGHVIISDYHNTGDGMLTGLHLMLVMKKTGKSLTELLADFKEYPQVLVNVPVKDKNSWKNHQAVVDAIDSVEKDMAGNGRVLVRPSGTQELLRVMAEGPTQEITQEYVDRIVKVVTTEMGE</sequence>
<evidence type="ECO:0000255" key="1">
    <source>
        <dbReference type="HAMAP-Rule" id="MF_01554"/>
    </source>
</evidence>
<protein>
    <recommendedName>
        <fullName evidence="1">Phosphoglucosamine mutase</fullName>
        <ecNumber evidence="1">5.4.2.10</ecNumber>
    </recommendedName>
</protein>
<name>GLMM_LACDA</name>
<organism>
    <name type="scientific">Lactobacillus delbrueckii subsp. bulgaricus (strain ATCC 11842 / DSM 20081 / BCRC 10696 / JCM 1002 / NBRC 13953 / NCIMB 11778 / NCTC 12712 / WDCM 00102 / Lb 14)</name>
    <dbReference type="NCBI Taxonomy" id="390333"/>
    <lineage>
        <taxon>Bacteria</taxon>
        <taxon>Bacillati</taxon>
        <taxon>Bacillota</taxon>
        <taxon>Bacilli</taxon>
        <taxon>Lactobacillales</taxon>
        <taxon>Lactobacillaceae</taxon>
        <taxon>Lactobacillus</taxon>
    </lineage>
</organism>
<dbReference type="EC" id="5.4.2.10" evidence="1"/>
<dbReference type="EMBL" id="CR954253">
    <property type="protein sequence ID" value="CAI97483.1"/>
    <property type="molecule type" value="Genomic_DNA"/>
</dbReference>
<dbReference type="RefSeq" id="WP_011543739.1">
    <property type="nucleotide sequence ID" value="NC_008054.1"/>
</dbReference>
<dbReference type="SMR" id="Q1GB12"/>
<dbReference type="STRING" id="390333.Ldb0654"/>
<dbReference type="KEGG" id="ldb:Ldb0654"/>
<dbReference type="PATRIC" id="fig|390333.13.peg.145"/>
<dbReference type="eggNOG" id="COG1109">
    <property type="taxonomic scope" value="Bacteria"/>
</dbReference>
<dbReference type="HOGENOM" id="CLU_016950_7_0_9"/>
<dbReference type="BioCyc" id="LDEL390333:LDB_RS02825-MONOMER"/>
<dbReference type="Proteomes" id="UP000001259">
    <property type="component" value="Chromosome"/>
</dbReference>
<dbReference type="GO" id="GO:0005829">
    <property type="term" value="C:cytosol"/>
    <property type="evidence" value="ECO:0007669"/>
    <property type="project" value="TreeGrafter"/>
</dbReference>
<dbReference type="GO" id="GO:0000287">
    <property type="term" value="F:magnesium ion binding"/>
    <property type="evidence" value="ECO:0007669"/>
    <property type="project" value="UniProtKB-UniRule"/>
</dbReference>
<dbReference type="GO" id="GO:0008966">
    <property type="term" value="F:phosphoglucosamine mutase activity"/>
    <property type="evidence" value="ECO:0007669"/>
    <property type="project" value="UniProtKB-UniRule"/>
</dbReference>
<dbReference type="GO" id="GO:0004615">
    <property type="term" value="F:phosphomannomutase activity"/>
    <property type="evidence" value="ECO:0007669"/>
    <property type="project" value="TreeGrafter"/>
</dbReference>
<dbReference type="GO" id="GO:0005975">
    <property type="term" value="P:carbohydrate metabolic process"/>
    <property type="evidence" value="ECO:0007669"/>
    <property type="project" value="InterPro"/>
</dbReference>
<dbReference type="GO" id="GO:0009252">
    <property type="term" value="P:peptidoglycan biosynthetic process"/>
    <property type="evidence" value="ECO:0007669"/>
    <property type="project" value="TreeGrafter"/>
</dbReference>
<dbReference type="GO" id="GO:0006048">
    <property type="term" value="P:UDP-N-acetylglucosamine biosynthetic process"/>
    <property type="evidence" value="ECO:0007669"/>
    <property type="project" value="TreeGrafter"/>
</dbReference>
<dbReference type="CDD" id="cd05802">
    <property type="entry name" value="GlmM"/>
    <property type="match status" value="1"/>
</dbReference>
<dbReference type="FunFam" id="3.30.310.50:FF:000001">
    <property type="entry name" value="Phosphoglucosamine mutase"/>
    <property type="match status" value="1"/>
</dbReference>
<dbReference type="FunFam" id="3.40.120.10:FF:000001">
    <property type="entry name" value="Phosphoglucosamine mutase"/>
    <property type="match status" value="1"/>
</dbReference>
<dbReference type="FunFam" id="3.40.120.10:FF:000002">
    <property type="entry name" value="Phosphoglucosamine mutase"/>
    <property type="match status" value="1"/>
</dbReference>
<dbReference type="Gene3D" id="3.40.120.10">
    <property type="entry name" value="Alpha-D-Glucose-1,6-Bisphosphate, subunit A, domain 3"/>
    <property type="match status" value="3"/>
</dbReference>
<dbReference type="Gene3D" id="3.30.310.50">
    <property type="entry name" value="Alpha-D-phosphohexomutase, C-terminal domain"/>
    <property type="match status" value="1"/>
</dbReference>
<dbReference type="HAMAP" id="MF_01554_B">
    <property type="entry name" value="GlmM_B"/>
    <property type="match status" value="1"/>
</dbReference>
<dbReference type="InterPro" id="IPR005844">
    <property type="entry name" value="A-D-PHexomutase_a/b/a-I"/>
</dbReference>
<dbReference type="InterPro" id="IPR016055">
    <property type="entry name" value="A-D-PHexomutase_a/b/a-I/II/III"/>
</dbReference>
<dbReference type="InterPro" id="IPR005845">
    <property type="entry name" value="A-D-PHexomutase_a/b/a-II"/>
</dbReference>
<dbReference type="InterPro" id="IPR005846">
    <property type="entry name" value="A-D-PHexomutase_a/b/a-III"/>
</dbReference>
<dbReference type="InterPro" id="IPR005843">
    <property type="entry name" value="A-D-PHexomutase_C"/>
</dbReference>
<dbReference type="InterPro" id="IPR036900">
    <property type="entry name" value="A-D-PHexomutase_C_sf"/>
</dbReference>
<dbReference type="InterPro" id="IPR016066">
    <property type="entry name" value="A-D-PHexomutase_CS"/>
</dbReference>
<dbReference type="InterPro" id="IPR005841">
    <property type="entry name" value="Alpha-D-phosphohexomutase_SF"/>
</dbReference>
<dbReference type="InterPro" id="IPR006352">
    <property type="entry name" value="GlmM_bact"/>
</dbReference>
<dbReference type="InterPro" id="IPR050060">
    <property type="entry name" value="Phosphoglucosamine_mutase"/>
</dbReference>
<dbReference type="NCBIfam" id="TIGR01455">
    <property type="entry name" value="glmM"/>
    <property type="match status" value="1"/>
</dbReference>
<dbReference type="PANTHER" id="PTHR42946:SF1">
    <property type="entry name" value="PHOSPHOGLUCOMUTASE (ALPHA-D-GLUCOSE-1,6-BISPHOSPHATE-DEPENDENT)"/>
    <property type="match status" value="1"/>
</dbReference>
<dbReference type="PANTHER" id="PTHR42946">
    <property type="entry name" value="PHOSPHOHEXOSE MUTASE"/>
    <property type="match status" value="1"/>
</dbReference>
<dbReference type="Pfam" id="PF02878">
    <property type="entry name" value="PGM_PMM_I"/>
    <property type="match status" value="1"/>
</dbReference>
<dbReference type="Pfam" id="PF02879">
    <property type="entry name" value="PGM_PMM_II"/>
    <property type="match status" value="1"/>
</dbReference>
<dbReference type="Pfam" id="PF02880">
    <property type="entry name" value="PGM_PMM_III"/>
    <property type="match status" value="1"/>
</dbReference>
<dbReference type="Pfam" id="PF00408">
    <property type="entry name" value="PGM_PMM_IV"/>
    <property type="match status" value="1"/>
</dbReference>
<dbReference type="PRINTS" id="PR00509">
    <property type="entry name" value="PGMPMM"/>
</dbReference>
<dbReference type="SUPFAM" id="SSF55957">
    <property type="entry name" value="Phosphoglucomutase, C-terminal domain"/>
    <property type="match status" value="1"/>
</dbReference>
<dbReference type="SUPFAM" id="SSF53738">
    <property type="entry name" value="Phosphoglucomutase, first 3 domains"/>
    <property type="match status" value="3"/>
</dbReference>
<dbReference type="PROSITE" id="PS00710">
    <property type="entry name" value="PGM_PMM"/>
    <property type="match status" value="1"/>
</dbReference>
<proteinExistence type="inferred from homology"/>
<feature type="chain" id="PRO_0000301328" description="Phosphoglucosamine mutase">
    <location>
        <begin position="1"/>
        <end position="450"/>
    </location>
</feature>
<feature type="active site" description="Phosphoserine intermediate" evidence="1">
    <location>
        <position position="103"/>
    </location>
</feature>
<feature type="binding site" description="via phosphate group" evidence="1">
    <location>
        <position position="103"/>
    </location>
    <ligand>
        <name>Mg(2+)</name>
        <dbReference type="ChEBI" id="CHEBI:18420"/>
    </ligand>
</feature>
<feature type="binding site" evidence="1">
    <location>
        <position position="243"/>
    </location>
    <ligand>
        <name>Mg(2+)</name>
        <dbReference type="ChEBI" id="CHEBI:18420"/>
    </ligand>
</feature>
<feature type="binding site" evidence="1">
    <location>
        <position position="245"/>
    </location>
    <ligand>
        <name>Mg(2+)</name>
        <dbReference type="ChEBI" id="CHEBI:18420"/>
    </ligand>
</feature>
<feature type="binding site" evidence="1">
    <location>
        <position position="247"/>
    </location>
    <ligand>
        <name>Mg(2+)</name>
        <dbReference type="ChEBI" id="CHEBI:18420"/>
    </ligand>
</feature>
<feature type="modified residue" description="Phosphoserine" evidence="1">
    <location>
        <position position="103"/>
    </location>
</feature>
<keyword id="KW-0413">Isomerase</keyword>
<keyword id="KW-0460">Magnesium</keyword>
<keyword id="KW-0479">Metal-binding</keyword>
<keyword id="KW-0597">Phosphoprotein</keyword>
<keyword id="KW-1185">Reference proteome</keyword>
<gene>
    <name evidence="1" type="primary">glmM</name>
    <name type="ordered locus">Ldb0654</name>
</gene>
<reference key="1">
    <citation type="journal article" date="2006" name="Proc. Natl. Acad. Sci. U.S.A.">
        <title>The complete genome sequence of Lactobacillus bulgaricus reveals extensive and ongoing reductive evolution.</title>
        <authorList>
            <person name="van de Guchte M."/>
            <person name="Penaud S."/>
            <person name="Grimaldi C."/>
            <person name="Barbe V."/>
            <person name="Bryson K."/>
            <person name="Nicolas P."/>
            <person name="Robert C."/>
            <person name="Oztas S."/>
            <person name="Mangenot S."/>
            <person name="Couloux A."/>
            <person name="Loux V."/>
            <person name="Dervyn R."/>
            <person name="Bossy R."/>
            <person name="Bolotin A."/>
            <person name="Batto J.-M."/>
            <person name="Walunas T."/>
            <person name="Gibrat J.-F."/>
            <person name="Bessieres P."/>
            <person name="Weissenbach J."/>
            <person name="Ehrlich S.D."/>
            <person name="Maguin E."/>
        </authorList>
    </citation>
    <scope>NUCLEOTIDE SEQUENCE [LARGE SCALE GENOMIC DNA]</scope>
    <source>
        <strain>ATCC 11842 / DSM 20081 / BCRC 10696 / JCM 1002 / NBRC 13953 / NCIMB 11778 / NCTC 12712 / WDCM 00102 / Lb 14</strain>
    </source>
</reference>
<accession>Q1GB12</accession>
<comment type="function">
    <text evidence="1">Catalyzes the conversion of glucosamine-6-phosphate to glucosamine-1-phosphate.</text>
</comment>
<comment type="catalytic activity">
    <reaction evidence="1">
        <text>alpha-D-glucosamine 1-phosphate = D-glucosamine 6-phosphate</text>
        <dbReference type="Rhea" id="RHEA:23424"/>
        <dbReference type="ChEBI" id="CHEBI:58516"/>
        <dbReference type="ChEBI" id="CHEBI:58725"/>
        <dbReference type="EC" id="5.4.2.10"/>
    </reaction>
</comment>
<comment type="cofactor">
    <cofactor evidence="1">
        <name>Mg(2+)</name>
        <dbReference type="ChEBI" id="CHEBI:18420"/>
    </cofactor>
    <text evidence="1">Binds 1 Mg(2+) ion per subunit.</text>
</comment>
<comment type="PTM">
    <text evidence="1">Activated by phosphorylation.</text>
</comment>
<comment type="similarity">
    <text evidence="1">Belongs to the phosphohexose mutase family.</text>
</comment>